<gene>
    <name evidence="1" type="primary">tyrS</name>
    <name type="ordered locus">Mfl587</name>
</gene>
<organism>
    <name type="scientific">Mesoplasma florum (strain ATCC 33453 / NBRC 100688 / NCTC 11704 / L1)</name>
    <name type="common">Acholeplasma florum</name>
    <dbReference type="NCBI Taxonomy" id="265311"/>
    <lineage>
        <taxon>Bacteria</taxon>
        <taxon>Bacillati</taxon>
        <taxon>Mycoplasmatota</taxon>
        <taxon>Mollicutes</taxon>
        <taxon>Entomoplasmatales</taxon>
        <taxon>Entomoplasmataceae</taxon>
        <taxon>Mesoplasma</taxon>
    </lineage>
</organism>
<comment type="function">
    <text evidence="1">Catalyzes the attachment of tyrosine to tRNA(Tyr) in a two-step reaction: tyrosine is first activated by ATP to form Tyr-AMP and then transferred to the acceptor end of tRNA(Tyr).</text>
</comment>
<comment type="catalytic activity">
    <reaction evidence="1">
        <text>tRNA(Tyr) + L-tyrosine + ATP = L-tyrosyl-tRNA(Tyr) + AMP + diphosphate + H(+)</text>
        <dbReference type="Rhea" id="RHEA:10220"/>
        <dbReference type="Rhea" id="RHEA-COMP:9706"/>
        <dbReference type="Rhea" id="RHEA-COMP:9707"/>
        <dbReference type="ChEBI" id="CHEBI:15378"/>
        <dbReference type="ChEBI" id="CHEBI:30616"/>
        <dbReference type="ChEBI" id="CHEBI:33019"/>
        <dbReference type="ChEBI" id="CHEBI:58315"/>
        <dbReference type="ChEBI" id="CHEBI:78442"/>
        <dbReference type="ChEBI" id="CHEBI:78536"/>
        <dbReference type="ChEBI" id="CHEBI:456215"/>
        <dbReference type="EC" id="6.1.1.1"/>
    </reaction>
</comment>
<comment type="subunit">
    <text evidence="1">Homodimer.</text>
</comment>
<comment type="subcellular location">
    <subcellularLocation>
        <location evidence="1">Cytoplasm</location>
    </subcellularLocation>
</comment>
<comment type="similarity">
    <text evidence="1">Belongs to the class-I aminoacyl-tRNA synthetase family. TyrS type 1 subfamily.</text>
</comment>
<feature type="chain" id="PRO_0000234726" description="Tyrosine--tRNA ligase">
    <location>
        <begin position="1"/>
        <end position="413"/>
    </location>
</feature>
<feature type="domain" description="S4 RNA-binding" evidence="1">
    <location>
        <begin position="346"/>
        <end position="413"/>
    </location>
</feature>
<feature type="short sequence motif" description="'HIGH' region">
    <location>
        <begin position="38"/>
        <end position="47"/>
    </location>
</feature>
<feature type="short sequence motif" description="'KMSKS' region">
    <location>
        <begin position="225"/>
        <end position="229"/>
    </location>
</feature>
<feature type="binding site" evidence="1">
    <location>
        <position position="33"/>
    </location>
    <ligand>
        <name>L-tyrosine</name>
        <dbReference type="ChEBI" id="CHEBI:58315"/>
    </ligand>
</feature>
<feature type="binding site" evidence="1">
    <location>
        <position position="162"/>
    </location>
    <ligand>
        <name>L-tyrosine</name>
        <dbReference type="ChEBI" id="CHEBI:58315"/>
    </ligand>
</feature>
<feature type="binding site" evidence="1">
    <location>
        <position position="166"/>
    </location>
    <ligand>
        <name>L-tyrosine</name>
        <dbReference type="ChEBI" id="CHEBI:58315"/>
    </ligand>
</feature>
<feature type="binding site" evidence="1">
    <location>
        <position position="228"/>
    </location>
    <ligand>
        <name>ATP</name>
        <dbReference type="ChEBI" id="CHEBI:30616"/>
    </ligand>
</feature>
<sequence length="413" mass="46375">MNIIKELEWRGLVKQITNEERLLKAQNDGAAVYCGFDPTADSLHVGHLMMIVTLKRFDKAGFQAIGLIGGGTGMIGDPSFKADERKLQTDEQVKFHATAIQNQLLRIIPDVTFANNVDWLGNMSLIDFLRDVGKDFNISYLLNKDSIATRISTGLSVTEFSYTMLQAYDFYNLYINHNCKVQIGGSDQWGNITSGTDYISTRVGSANTEAAGFTIPLLTKSDGQKFGKTESGAVWLDSNKTSVYDFYQFWINQDDNDCVKMLKYLTFLTKEEIDELEAKHKEAPHLRTMQKTLASEITKFVHGDKELNKAIKLTDAFFTGNILNLDDDLLELAIKSIPTIQLEKTTSAIDAIVNVNAASSKREAREFINAKAISFNDVAVQDENMLLSEIKTIKNNKIIVKKGKKKYYLLEIK</sequence>
<proteinExistence type="inferred from homology"/>
<name>SYY_MESFL</name>
<reference key="1">
    <citation type="submission" date="2004-06" db="EMBL/GenBank/DDBJ databases">
        <authorList>
            <person name="Birren B.W."/>
            <person name="Stange-Thomann N."/>
            <person name="Hafez N."/>
            <person name="DeCaprio D."/>
            <person name="Fisher S."/>
            <person name="Butler J."/>
            <person name="Elkins T."/>
            <person name="Kodira C.D."/>
            <person name="Major J."/>
            <person name="Wang S."/>
            <person name="Nicol R."/>
            <person name="Nusbaum C."/>
        </authorList>
    </citation>
    <scope>NUCLEOTIDE SEQUENCE [LARGE SCALE GENOMIC DNA]</scope>
    <source>
        <strain>ATCC 33453 / NBRC 100688 / NCTC 11704 / L1</strain>
    </source>
</reference>
<dbReference type="EC" id="6.1.1.1" evidence="1"/>
<dbReference type="EMBL" id="AE017263">
    <property type="protein sequence ID" value="AAT75945.1"/>
    <property type="molecule type" value="Genomic_DNA"/>
</dbReference>
<dbReference type="RefSeq" id="WP_011183485.1">
    <property type="nucleotide sequence ID" value="NC_006055.1"/>
</dbReference>
<dbReference type="RefSeq" id="YP_053829.1">
    <property type="nucleotide sequence ID" value="NC_006055.1"/>
</dbReference>
<dbReference type="SMR" id="Q6F0M8"/>
<dbReference type="STRING" id="265311.Mfl587"/>
<dbReference type="PaxDb" id="265311-Mfl587"/>
<dbReference type="EnsemblBacteria" id="AAT75945">
    <property type="protein sequence ID" value="AAT75945"/>
    <property type="gene ID" value="Mfl587"/>
</dbReference>
<dbReference type="GeneID" id="2898112"/>
<dbReference type="KEGG" id="mfl:Mfl587"/>
<dbReference type="PATRIC" id="fig|265311.5.peg.591"/>
<dbReference type="eggNOG" id="COG0162">
    <property type="taxonomic scope" value="Bacteria"/>
</dbReference>
<dbReference type="HOGENOM" id="CLU_024003_0_3_14"/>
<dbReference type="OrthoDB" id="9804243at2"/>
<dbReference type="Proteomes" id="UP000006647">
    <property type="component" value="Chromosome"/>
</dbReference>
<dbReference type="GO" id="GO:0005829">
    <property type="term" value="C:cytosol"/>
    <property type="evidence" value="ECO:0007669"/>
    <property type="project" value="TreeGrafter"/>
</dbReference>
<dbReference type="GO" id="GO:0005524">
    <property type="term" value="F:ATP binding"/>
    <property type="evidence" value="ECO:0007669"/>
    <property type="project" value="UniProtKB-UniRule"/>
</dbReference>
<dbReference type="GO" id="GO:0003723">
    <property type="term" value="F:RNA binding"/>
    <property type="evidence" value="ECO:0007669"/>
    <property type="project" value="UniProtKB-KW"/>
</dbReference>
<dbReference type="GO" id="GO:0004831">
    <property type="term" value="F:tyrosine-tRNA ligase activity"/>
    <property type="evidence" value="ECO:0007669"/>
    <property type="project" value="UniProtKB-UniRule"/>
</dbReference>
<dbReference type="GO" id="GO:0006437">
    <property type="term" value="P:tyrosyl-tRNA aminoacylation"/>
    <property type="evidence" value="ECO:0007669"/>
    <property type="project" value="UniProtKB-UniRule"/>
</dbReference>
<dbReference type="FunFam" id="1.10.240.10:FF:000001">
    <property type="entry name" value="Tyrosine--tRNA ligase"/>
    <property type="match status" value="1"/>
</dbReference>
<dbReference type="Gene3D" id="3.40.50.620">
    <property type="entry name" value="HUPs"/>
    <property type="match status" value="1"/>
</dbReference>
<dbReference type="Gene3D" id="3.10.290.10">
    <property type="entry name" value="RNA-binding S4 domain"/>
    <property type="match status" value="1"/>
</dbReference>
<dbReference type="Gene3D" id="1.10.240.10">
    <property type="entry name" value="Tyrosyl-Transfer RNA Synthetase"/>
    <property type="match status" value="1"/>
</dbReference>
<dbReference type="HAMAP" id="MF_02006">
    <property type="entry name" value="Tyr_tRNA_synth_type1"/>
    <property type="match status" value="1"/>
</dbReference>
<dbReference type="InterPro" id="IPR001412">
    <property type="entry name" value="aa-tRNA-synth_I_CS"/>
</dbReference>
<dbReference type="InterPro" id="IPR002305">
    <property type="entry name" value="aa-tRNA-synth_Ic"/>
</dbReference>
<dbReference type="InterPro" id="IPR014729">
    <property type="entry name" value="Rossmann-like_a/b/a_fold"/>
</dbReference>
<dbReference type="InterPro" id="IPR036986">
    <property type="entry name" value="S4_RNA-bd_sf"/>
</dbReference>
<dbReference type="InterPro" id="IPR054608">
    <property type="entry name" value="SYY-like_C"/>
</dbReference>
<dbReference type="InterPro" id="IPR002307">
    <property type="entry name" value="Tyr-tRNA-ligase"/>
</dbReference>
<dbReference type="InterPro" id="IPR024088">
    <property type="entry name" value="Tyr-tRNA-ligase_bac-type"/>
</dbReference>
<dbReference type="InterPro" id="IPR024107">
    <property type="entry name" value="Tyr-tRNA-ligase_bac_1"/>
</dbReference>
<dbReference type="NCBIfam" id="TIGR00234">
    <property type="entry name" value="tyrS"/>
    <property type="match status" value="1"/>
</dbReference>
<dbReference type="PANTHER" id="PTHR11766:SF0">
    <property type="entry name" value="TYROSINE--TRNA LIGASE, MITOCHONDRIAL"/>
    <property type="match status" value="1"/>
</dbReference>
<dbReference type="PANTHER" id="PTHR11766">
    <property type="entry name" value="TYROSYL-TRNA SYNTHETASE"/>
    <property type="match status" value="1"/>
</dbReference>
<dbReference type="Pfam" id="PF22421">
    <property type="entry name" value="SYY_C-terminal"/>
    <property type="match status" value="1"/>
</dbReference>
<dbReference type="Pfam" id="PF00579">
    <property type="entry name" value="tRNA-synt_1b"/>
    <property type="match status" value="1"/>
</dbReference>
<dbReference type="PRINTS" id="PR01040">
    <property type="entry name" value="TRNASYNTHTYR"/>
</dbReference>
<dbReference type="SUPFAM" id="SSF55174">
    <property type="entry name" value="Alpha-L RNA-binding motif"/>
    <property type="match status" value="1"/>
</dbReference>
<dbReference type="SUPFAM" id="SSF52374">
    <property type="entry name" value="Nucleotidylyl transferase"/>
    <property type="match status" value="1"/>
</dbReference>
<dbReference type="PROSITE" id="PS00178">
    <property type="entry name" value="AA_TRNA_LIGASE_I"/>
    <property type="match status" value="1"/>
</dbReference>
<dbReference type="PROSITE" id="PS50889">
    <property type="entry name" value="S4"/>
    <property type="match status" value="1"/>
</dbReference>
<accession>Q6F0M8</accession>
<keyword id="KW-0030">Aminoacyl-tRNA synthetase</keyword>
<keyword id="KW-0067">ATP-binding</keyword>
<keyword id="KW-0963">Cytoplasm</keyword>
<keyword id="KW-0436">Ligase</keyword>
<keyword id="KW-0547">Nucleotide-binding</keyword>
<keyword id="KW-0648">Protein biosynthesis</keyword>
<keyword id="KW-1185">Reference proteome</keyword>
<keyword id="KW-0694">RNA-binding</keyword>
<evidence type="ECO:0000255" key="1">
    <source>
        <dbReference type="HAMAP-Rule" id="MF_02006"/>
    </source>
</evidence>
<protein>
    <recommendedName>
        <fullName evidence="1">Tyrosine--tRNA ligase</fullName>
        <ecNumber evidence="1">6.1.1.1</ecNumber>
    </recommendedName>
    <alternativeName>
        <fullName evidence="1">Tyrosyl-tRNA synthetase</fullName>
        <shortName evidence="1">TyrRS</shortName>
    </alternativeName>
</protein>